<evidence type="ECO:0000250" key="1"/>
<evidence type="ECO:0000255" key="2"/>
<evidence type="ECO:0000305" key="3"/>
<organism>
    <name type="scientific">Pichia angusta</name>
    <name type="common">Yeast</name>
    <name type="synonym">Hansenula polymorpha</name>
    <dbReference type="NCBI Taxonomy" id="870730"/>
    <lineage>
        <taxon>Eukaryota</taxon>
        <taxon>Fungi</taxon>
        <taxon>Dikarya</taxon>
        <taxon>Ascomycota</taxon>
        <taxon>Saccharomycotina</taxon>
        <taxon>Pichiomycetes</taxon>
        <taxon>Pichiales</taxon>
        <taxon>Pichiaceae</taxon>
        <taxon>Ogataea</taxon>
    </lineage>
</organism>
<name>EXG_PICAN</name>
<sequence>MLFPVLHLPKAMKFSSFSLIASSLLSLVAAAPVTLLKRDSRWDYANDKIYGVNIGGWLVLEPFITPSLFEAVSSDVPVDEYHYTEALGKEEAEKRLQEHWSTWIKEEDFKGMANAGLNFVRIPIGYWAFQLAEGDPYVQGQQEYLDKALEWCAKYGLKAWVDLHGAPGSQNGFDNSGKRGEIGWQNTTGYVDLTVQVLDQLTSKYGGSNYSDVIIGIELLNEPLGSYLDFDQLVDFYNKGYQLVRNNGNAPVIIHDAYLPDHTFDNVLNTEQDPNVWEVIVDHHHYQVFDEGSLSQSIDEHVSTACGWGQSENTEYHYSLCGEWTAALTDCAKWLNGAGRGARYDATFGGGNYIGSCDQLYTANYDYFTPEVISNYRRYVEAQMDSFLYGKNAGWVFWCWKTENTIEWDMQRLLGLGIIPQPLDDRQYPNQCGFS</sequence>
<accession>Q12626</accession>
<reference key="1">
    <citation type="journal article" date="1999" name="Yeast">
        <title>Cloning and characterization of 1,3-beta-glucanase-encoding genes from non-conventional yeasts.</title>
        <authorList>
            <person name="Esteban P.F."/>
            <person name="Vazquez de Aldana C.R."/>
            <person name="del Rey F."/>
        </authorList>
    </citation>
    <scope>NUCLEOTIDE SEQUENCE [GENOMIC DNA]</scope>
    <source>
        <strain>ATCC 14754 / CBS 1976 / JCM 3620 / NBRC 0799 / NCYC 495 / NRRL Y-1798 / VKM Y-1397</strain>
    </source>
</reference>
<dbReference type="EC" id="3.2.1.58"/>
<dbReference type="EMBL" id="Z46868">
    <property type="protein sequence ID" value="CAA86948.1"/>
    <property type="molecule type" value="Genomic_DNA"/>
</dbReference>
<dbReference type="SMR" id="Q12626"/>
<dbReference type="CAZy" id="GH5">
    <property type="family name" value="Glycoside Hydrolase Family 5"/>
</dbReference>
<dbReference type="PhylomeDB" id="Q12626"/>
<dbReference type="GO" id="GO:0009986">
    <property type="term" value="C:cell surface"/>
    <property type="evidence" value="ECO:0007669"/>
    <property type="project" value="TreeGrafter"/>
</dbReference>
<dbReference type="GO" id="GO:0005576">
    <property type="term" value="C:extracellular region"/>
    <property type="evidence" value="ECO:0007669"/>
    <property type="project" value="UniProtKB-SubCell"/>
</dbReference>
<dbReference type="GO" id="GO:0004338">
    <property type="term" value="F:glucan exo-1,3-beta-glucosidase activity"/>
    <property type="evidence" value="ECO:0007669"/>
    <property type="project" value="UniProtKB-EC"/>
</dbReference>
<dbReference type="GO" id="GO:0071555">
    <property type="term" value="P:cell wall organization"/>
    <property type="evidence" value="ECO:0007669"/>
    <property type="project" value="UniProtKB-KW"/>
</dbReference>
<dbReference type="GO" id="GO:0009251">
    <property type="term" value="P:glucan catabolic process"/>
    <property type="evidence" value="ECO:0007669"/>
    <property type="project" value="TreeGrafter"/>
</dbReference>
<dbReference type="FunFam" id="3.20.20.80:FF:000033">
    <property type="entry name" value="Glucan 1,3-beta-glucosidase A"/>
    <property type="match status" value="1"/>
</dbReference>
<dbReference type="Gene3D" id="3.20.20.80">
    <property type="entry name" value="Glycosidases"/>
    <property type="match status" value="1"/>
</dbReference>
<dbReference type="InterPro" id="IPR001547">
    <property type="entry name" value="Glyco_hydro_5"/>
</dbReference>
<dbReference type="InterPro" id="IPR018087">
    <property type="entry name" value="Glyco_hydro_5_CS"/>
</dbReference>
<dbReference type="InterPro" id="IPR017853">
    <property type="entry name" value="Glycoside_hydrolase_SF"/>
</dbReference>
<dbReference type="InterPro" id="IPR050386">
    <property type="entry name" value="Glycosyl_hydrolase_5"/>
</dbReference>
<dbReference type="PANTHER" id="PTHR31297:SF1">
    <property type="entry name" value="GLUCAN 1,3-BETA-GLUCOSIDASE I_II-RELATED"/>
    <property type="match status" value="1"/>
</dbReference>
<dbReference type="PANTHER" id="PTHR31297">
    <property type="entry name" value="GLUCAN ENDO-1,6-BETA-GLUCOSIDASE B"/>
    <property type="match status" value="1"/>
</dbReference>
<dbReference type="Pfam" id="PF00150">
    <property type="entry name" value="Cellulase"/>
    <property type="match status" value="1"/>
</dbReference>
<dbReference type="SUPFAM" id="SSF51445">
    <property type="entry name" value="(Trans)glycosidases"/>
    <property type="match status" value="1"/>
</dbReference>
<dbReference type="PROSITE" id="PS00659">
    <property type="entry name" value="GLYCOSYL_HYDROL_F5"/>
    <property type="match status" value="1"/>
</dbReference>
<keyword id="KW-0961">Cell wall biogenesis/degradation</keyword>
<keyword id="KW-1015">Disulfide bond</keyword>
<keyword id="KW-0326">Glycosidase</keyword>
<keyword id="KW-0378">Hydrolase</keyword>
<keyword id="KW-0964">Secreted</keyword>
<keyword id="KW-0732">Signal</keyword>
<keyword id="KW-0865">Zymogen</keyword>
<comment type="function">
    <text evidence="1">Beta-glucanases participate in the metabolism of beta-glucan, the main structural component of the cell wall. It could also function biosynthetically as a transglycosylase (By similarity).</text>
</comment>
<comment type="catalytic activity">
    <reaction>
        <text>Successive hydrolysis of beta-D-glucose units from the non-reducing ends of (1-&gt;3)-beta-D-glucans, releasing alpha-glucose.</text>
        <dbReference type="EC" id="3.2.1.58"/>
    </reaction>
</comment>
<comment type="subcellular location">
    <subcellularLocation>
        <location evidence="3">Secreted</location>
    </subcellularLocation>
</comment>
<comment type="similarity">
    <text evidence="3">Belongs to the glycosyl hydrolase 5 (cellulase A) family.</text>
</comment>
<proteinExistence type="inferred from homology"/>
<protein>
    <recommendedName>
        <fullName>Glucan 1,3-beta-glucosidase</fullName>
        <ecNumber>3.2.1.58</ecNumber>
    </recommendedName>
    <alternativeName>
        <fullName>Exo-1,3-beta-glucanase</fullName>
    </alternativeName>
</protein>
<feature type="signal peptide" evidence="2">
    <location>
        <begin position="1"/>
        <end position="30"/>
    </location>
</feature>
<feature type="chain" id="PRO_0000007886" description="Glucan 1,3-beta-glucosidase">
    <location>
        <begin position="31"/>
        <end position="435"/>
    </location>
</feature>
<feature type="active site" description="Proton donor" evidence="1">
    <location>
        <position position="222"/>
    </location>
</feature>
<feature type="active site" description="Nucleophile" evidence="1">
    <location>
        <position position="323"/>
    </location>
</feature>
<feature type="disulfide bond" evidence="1">
    <location>
        <begin position="306"/>
        <end position="432"/>
    </location>
</feature>
<feature type="disulfide bond" evidence="1">
    <location>
        <begin position="331"/>
        <end position="357"/>
    </location>
</feature>